<organism>
    <name type="scientific">Thermosynechococcus vestitus (strain NIES-2133 / IAM M-273 / BP-1)</name>
    <dbReference type="NCBI Taxonomy" id="197221"/>
    <lineage>
        <taxon>Bacteria</taxon>
        <taxon>Bacillati</taxon>
        <taxon>Cyanobacteriota</taxon>
        <taxon>Cyanophyceae</taxon>
        <taxon>Acaryochloridales</taxon>
        <taxon>Thermosynechococcaceae</taxon>
        <taxon>Thermosynechococcus</taxon>
    </lineage>
</organism>
<keyword id="KW-0002">3D-structure</keyword>
<keyword id="KW-0004">4Fe-4S</keyword>
<keyword id="KW-0067">ATP-binding</keyword>
<keyword id="KW-0149">Chlorophyll biosynthesis</keyword>
<keyword id="KW-0408">Iron</keyword>
<keyword id="KW-0411">Iron-sulfur</keyword>
<keyword id="KW-0479">Metal-binding</keyword>
<keyword id="KW-0547">Nucleotide-binding</keyword>
<keyword id="KW-0560">Oxidoreductase</keyword>
<keyword id="KW-0602">Photosynthesis</keyword>
<keyword id="KW-1185">Reference proteome</keyword>
<evidence type="ECO:0000255" key="1">
    <source>
        <dbReference type="HAMAP-Rule" id="MF_00352"/>
    </source>
</evidence>
<evidence type="ECO:0007829" key="2">
    <source>
        <dbReference type="PDB" id="2XDQ"/>
    </source>
</evidence>
<protein>
    <recommendedName>
        <fullName evidence="1">Light-independent protochlorophyllide reductase subunit N</fullName>
        <shortName evidence="1">DPOR subunit N</shortName>
        <shortName evidence="1">LI-POR subunit N</shortName>
        <ecNumber evidence="1">1.3.7.7</ecNumber>
    </recommendedName>
</protein>
<dbReference type="EC" id="1.3.7.7" evidence="1"/>
<dbReference type="EMBL" id="BA000039">
    <property type="protein sequence ID" value="BAC09897.1"/>
    <property type="molecule type" value="Genomic_DNA"/>
</dbReference>
<dbReference type="RefSeq" id="NP_683135.1">
    <property type="nucleotide sequence ID" value="NC_004113.1"/>
</dbReference>
<dbReference type="RefSeq" id="WP_011058178.1">
    <property type="nucleotide sequence ID" value="NC_004113.1"/>
</dbReference>
<dbReference type="PDB" id="2XDQ">
    <property type="method" value="X-ray"/>
    <property type="resolution" value="2.40 A"/>
    <property type="chains" value="A=1-460"/>
</dbReference>
<dbReference type="PDBsum" id="2XDQ"/>
<dbReference type="SMR" id="Q8DGH2"/>
<dbReference type="STRING" id="197221.gene:10748964"/>
<dbReference type="EnsemblBacteria" id="BAC09897">
    <property type="protein sequence ID" value="BAC09897"/>
    <property type="gene ID" value="BAC09897"/>
</dbReference>
<dbReference type="KEGG" id="tel:tll2345"/>
<dbReference type="PATRIC" id="fig|197221.4.peg.2458"/>
<dbReference type="eggNOG" id="COG2710">
    <property type="taxonomic scope" value="Bacteria"/>
</dbReference>
<dbReference type="UniPathway" id="UPA00670"/>
<dbReference type="EvolutionaryTrace" id="Q8DGH2"/>
<dbReference type="Proteomes" id="UP000000440">
    <property type="component" value="Chromosome"/>
</dbReference>
<dbReference type="GO" id="GO:0051539">
    <property type="term" value="F:4 iron, 4 sulfur cluster binding"/>
    <property type="evidence" value="ECO:0007669"/>
    <property type="project" value="UniProtKB-UniRule"/>
</dbReference>
<dbReference type="GO" id="GO:0005524">
    <property type="term" value="F:ATP binding"/>
    <property type="evidence" value="ECO:0007669"/>
    <property type="project" value="UniProtKB-UniRule"/>
</dbReference>
<dbReference type="GO" id="GO:0046872">
    <property type="term" value="F:metal ion binding"/>
    <property type="evidence" value="ECO:0007669"/>
    <property type="project" value="UniProtKB-KW"/>
</dbReference>
<dbReference type="GO" id="GO:0016730">
    <property type="term" value="F:oxidoreductase activity, acting on iron-sulfur proteins as donors"/>
    <property type="evidence" value="ECO:0007669"/>
    <property type="project" value="InterPro"/>
</dbReference>
<dbReference type="GO" id="GO:0016636">
    <property type="term" value="F:oxidoreductase activity, acting on the CH-CH group of donors, iron-sulfur protein as acceptor"/>
    <property type="evidence" value="ECO:0007669"/>
    <property type="project" value="UniProtKB-UniRule"/>
</dbReference>
<dbReference type="GO" id="GO:0036068">
    <property type="term" value="P:light-independent chlorophyll biosynthetic process"/>
    <property type="evidence" value="ECO:0007669"/>
    <property type="project" value="UniProtKB-UniRule"/>
</dbReference>
<dbReference type="GO" id="GO:0019685">
    <property type="term" value="P:photosynthesis, dark reaction"/>
    <property type="evidence" value="ECO:0007669"/>
    <property type="project" value="InterPro"/>
</dbReference>
<dbReference type="CDD" id="cd01979">
    <property type="entry name" value="Pchlide_reductase_N"/>
    <property type="match status" value="1"/>
</dbReference>
<dbReference type="Gene3D" id="3.40.50.1980">
    <property type="entry name" value="Nitrogenase molybdenum iron protein domain"/>
    <property type="match status" value="3"/>
</dbReference>
<dbReference type="HAMAP" id="MF_00352">
    <property type="entry name" value="ChlN_BchN"/>
    <property type="match status" value="1"/>
</dbReference>
<dbReference type="InterPro" id="IPR050293">
    <property type="entry name" value="LIPOR_BchN/ChlN"/>
</dbReference>
<dbReference type="InterPro" id="IPR000510">
    <property type="entry name" value="Nase/OxRdtase_comp1"/>
</dbReference>
<dbReference type="InterPro" id="IPR005970">
    <property type="entry name" value="Protochl_reductN"/>
</dbReference>
<dbReference type="NCBIfam" id="TIGR01279">
    <property type="entry name" value="DPOR_bchN"/>
    <property type="match status" value="1"/>
</dbReference>
<dbReference type="NCBIfam" id="NF002768">
    <property type="entry name" value="PRK02842.1"/>
    <property type="match status" value="1"/>
</dbReference>
<dbReference type="PANTHER" id="PTHR39429">
    <property type="entry name" value="LIGHT-INDEPENDENT PROTOCHLOROPHYLLIDE REDUCTASE SUBUNIT N"/>
    <property type="match status" value="1"/>
</dbReference>
<dbReference type="PANTHER" id="PTHR39429:SF3">
    <property type="entry name" value="LIGHT-INDEPENDENT PROTOCHLOROPHYLLIDE REDUCTASE SUBUNIT N"/>
    <property type="match status" value="1"/>
</dbReference>
<dbReference type="Pfam" id="PF00148">
    <property type="entry name" value="Oxidored_nitro"/>
    <property type="match status" value="1"/>
</dbReference>
<dbReference type="PIRSF" id="PIRSF000162">
    <property type="entry name" value="P_chlorophyll_rd"/>
    <property type="match status" value="1"/>
</dbReference>
<dbReference type="SUPFAM" id="SSF53807">
    <property type="entry name" value="Helical backbone' metal receptor"/>
    <property type="match status" value="1"/>
</dbReference>
<comment type="function">
    <text evidence="1">Component of the dark-operative protochlorophyllide reductase (DPOR) that uses Mg-ATP and reduced ferredoxin to reduce ring D of protochlorophyllide (Pchlide) to form chlorophyllide a (Chlide). This reaction is light-independent. The NB-protein (ChlN-ChlB) is the catalytic component of the complex.</text>
</comment>
<comment type="catalytic activity">
    <reaction evidence="1">
        <text>chlorophyllide a + oxidized 2[4Fe-4S]-[ferredoxin] + 2 ADP + 2 phosphate = protochlorophyllide a + reduced 2[4Fe-4S]-[ferredoxin] + 2 ATP + 2 H2O</text>
        <dbReference type="Rhea" id="RHEA:28202"/>
        <dbReference type="Rhea" id="RHEA-COMP:10002"/>
        <dbReference type="Rhea" id="RHEA-COMP:10004"/>
        <dbReference type="ChEBI" id="CHEBI:15377"/>
        <dbReference type="ChEBI" id="CHEBI:30616"/>
        <dbReference type="ChEBI" id="CHEBI:33722"/>
        <dbReference type="ChEBI" id="CHEBI:33723"/>
        <dbReference type="ChEBI" id="CHEBI:43474"/>
        <dbReference type="ChEBI" id="CHEBI:83348"/>
        <dbReference type="ChEBI" id="CHEBI:83350"/>
        <dbReference type="ChEBI" id="CHEBI:456216"/>
        <dbReference type="EC" id="1.3.7.7"/>
    </reaction>
</comment>
<comment type="cofactor">
    <cofactor evidence="1">
        <name>[4Fe-4S] cluster</name>
        <dbReference type="ChEBI" id="CHEBI:49883"/>
    </cofactor>
    <text evidence="1">Binds 1 [4Fe-4S] cluster per heterodimer. The cluster is bound at the heterodimer interface by residues from both subunits.</text>
</comment>
<comment type="pathway">
    <text evidence="1">Porphyrin-containing compound metabolism; chlorophyll biosynthesis (light-independent).</text>
</comment>
<comment type="subunit">
    <text evidence="1">Protochlorophyllide reductase is composed of three subunits; ChlL, ChlN and ChlB. Forms a heterotetramer of two ChlB and two ChlN subunits.</text>
</comment>
<comment type="similarity">
    <text evidence="1">Belongs to the BchN/ChlN family.</text>
</comment>
<feature type="chain" id="PRO_0000208602" description="Light-independent protochlorophyllide reductase subunit N">
    <location>
        <begin position="1"/>
        <end position="460"/>
    </location>
</feature>
<feature type="binding site" evidence="1">
    <location>
        <position position="22"/>
    </location>
    <ligand>
        <name>[4Fe-4S] cluster</name>
        <dbReference type="ChEBI" id="CHEBI:49883"/>
        <note>ligand shared with heterodimeric partner</note>
    </ligand>
</feature>
<feature type="binding site" evidence="1">
    <location>
        <position position="47"/>
    </location>
    <ligand>
        <name>[4Fe-4S] cluster</name>
        <dbReference type="ChEBI" id="CHEBI:49883"/>
        <note>ligand shared with heterodimeric partner</note>
    </ligand>
</feature>
<feature type="binding site" evidence="1">
    <location>
        <position position="107"/>
    </location>
    <ligand>
        <name>[4Fe-4S] cluster</name>
        <dbReference type="ChEBI" id="CHEBI:49883"/>
        <note>ligand shared with heterodimeric partner</note>
    </ligand>
</feature>
<feature type="strand" evidence="2">
    <location>
        <begin position="10"/>
        <end position="13"/>
    </location>
</feature>
<feature type="helix" evidence="2">
    <location>
        <begin position="23"/>
        <end position="25"/>
    </location>
</feature>
<feature type="helix" evidence="2">
    <location>
        <begin position="26"/>
        <end position="33"/>
    </location>
</feature>
<feature type="strand" evidence="2">
    <location>
        <begin position="37"/>
        <end position="43"/>
    </location>
</feature>
<feature type="helix" evidence="2">
    <location>
        <begin position="45"/>
        <end position="54"/>
    </location>
</feature>
<feature type="helix" evidence="2">
    <location>
        <begin position="56"/>
        <end position="60"/>
    </location>
</feature>
<feature type="strand" evidence="2">
    <location>
        <begin position="64"/>
        <end position="69"/>
    </location>
</feature>
<feature type="helix" evidence="2">
    <location>
        <begin position="72"/>
        <end position="75"/>
    </location>
</feature>
<feature type="helix" evidence="2">
    <location>
        <begin position="81"/>
        <end position="96"/>
    </location>
</feature>
<feature type="strand" evidence="2">
    <location>
        <begin position="99"/>
        <end position="105"/>
    </location>
</feature>
<feature type="helix" evidence="2">
    <location>
        <begin position="107"/>
        <end position="111"/>
    </location>
</feature>
<feature type="helix" evidence="2">
    <location>
        <begin position="116"/>
        <end position="127"/>
    </location>
</feature>
<feature type="strand" evidence="2">
    <location>
        <begin position="131"/>
        <end position="135"/>
    </location>
</feature>
<feature type="turn" evidence="2">
    <location>
        <begin position="138"/>
        <end position="140"/>
    </location>
</feature>
<feature type="helix" evidence="2">
    <location>
        <begin position="145"/>
        <end position="155"/>
    </location>
</feature>
<feature type="strand" evidence="2">
    <location>
        <begin position="199"/>
        <end position="203"/>
    </location>
</feature>
<feature type="helix" evidence="2">
    <location>
        <begin position="207"/>
        <end position="217"/>
    </location>
</feature>
<feature type="helix" evidence="2">
    <location>
        <begin position="218"/>
        <end position="220"/>
    </location>
</feature>
<feature type="strand" evidence="2">
    <location>
        <begin position="224"/>
        <end position="229"/>
    </location>
</feature>
<feature type="helix" evidence="2">
    <location>
        <begin position="233"/>
        <end position="235"/>
    </location>
</feature>
<feature type="strand" evidence="2">
    <location>
        <begin position="244"/>
        <end position="249"/>
    </location>
</feature>
<feature type="helix" evidence="2">
    <location>
        <begin position="253"/>
        <end position="261"/>
    </location>
</feature>
<feature type="strand" evidence="2">
    <location>
        <begin position="266"/>
        <end position="268"/>
    </location>
</feature>
<feature type="helix" evidence="2">
    <location>
        <begin position="275"/>
        <end position="289"/>
    </location>
</feature>
<feature type="helix" evidence="2">
    <location>
        <begin position="298"/>
        <end position="306"/>
    </location>
</feature>
<feature type="helix" evidence="2">
    <location>
        <begin position="309"/>
        <end position="315"/>
    </location>
</feature>
<feature type="strand" evidence="2">
    <location>
        <begin position="319"/>
        <end position="322"/>
    </location>
</feature>
<feature type="helix" evidence="2">
    <location>
        <begin position="329"/>
        <end position="338"/>
    </location>
</feature>
<feature type="strand" evidence="2">
    <location>
        <begin position="342"/>
        <end position="349"/>
    </location>
</feature>
<feature type="helix" evidence="2">
    <location>
        <begin position="353"/>
        <end position="369"/>
    </location>
</feature>
<feature type="strand" evidence="2">
    <location>
        <begin position="376"/>
        <end position="380"/>
    </location>
</feature>
<feature type="helix" evidence="2">
    <location>
        <begin position="383"/>
        <end position="393"/>
    </location>
</feature>
<feature type="strand" evidence="2">
    <location>
        <begin position="396"/>
        <end position="400"/>
    </location>
</feature>
<feature type="helix" evidence="2">
    <location>
        <begin position="402"/>
        <end position="409"/>
    </location>
</feature>
<feature type="strand" evidence="2">
    <location>
        <begin position="415"/>
        <end position="417"/>
    </location>
</feature>
<feature type="helix" evidence="2">
    <location>
        <begin position="420"/>
        <end position="423"/>
    </location>
</feature>
<feature type="helix" evidence="2">
    <location>
        <begin position="429"/>
        <end position="431"/>
    </location>
</feature>
<feature type="helix" evidence="2">
    <location>
        <begin position="432"/>
        <end position="448"/>
    </location>
</feature>
<feature type="strand" evidence="2">
    <location>
        <begin position="451"/>
        <end position="453"/>
    </location>
</feature>
<accession>Q8DGH2</accession>
<reference key="1">
    <citation type="journal article" date="2002" name="DNA Res.">
        <title>Complete genome structure of the thermophilic cyanobacterium Thermosynechococcus elongatus BP-1.</title>
        <authorList>
            <person name="Nakamura Y."/>
            <person name="Kaneko T."/>
            <person name="Sato S."/>
            <person name="Ikeuchi M."/>
            <person name="Katoh H."/>
            <person name="Sasamoto S."/>
            <person name="Watanabe A."/>
            <person name="Iriguchi M."/>
            <person name="Kawashima K."/>
            <person name="Kimura T."/>
            <person name="Kishida Y."/>
            <person name="Kiyokawa C."/>
            <person name="Kohara M."/>
            <person name="Matsumoto M."/>
            <person name="Matsuno A."/>
            <person name="Nakazaki N."/>
            <person name="Shimpo S."/>
            <person name="Sugimoto M."/>
            <person name="Takeuchi C."/>
            <person name="Yamada M."/>
            <person name="Tabata S."/>
        </authorList>
    </citation>
    <scope>NUCLEOTIDE SEQUENCE [LARGE SCALE GENOMIC DNA]</scope>
    <source>
        <strain>NIES-2133 / IAM M-273 / BP-1</strain>
    </source>
</reference>
<proteinExistence type="evidence at protein level"/>
<sequence length="460" mass="51509">MTVTAPNALNFECETGNYHTFCPISCVAWLYQKIEDSFFLVIGTKTCGYFLQNAMGVMIFAEPRYAMAELEEGDISAQLNDYEELKRLCLEIKRDRNPSVIVWIGTCTTEIIKMDLEGLAPKLEAEIGIPIVVARANGLDYAFTQGEDTVLAAMAARCPTSTAISDPEERNPIQRLLNFGKKKEEVQAQSSQYHPHPPLVLFGSLPDPVVTQLTLELKKQGIKVSGWLPAKRYTELPVIDEGYYVAGVNPFLSRTATTLIRRRKCQLITAPFPIGPDGTRTWIEQICATFGIQPQGLAEREAETWQKLSDYLELVRGKSVFFMGDNLLEISLARFLIRCGMRVLEIGIPYMDKRYQAAELALLSQTCAEMGHPLPTIVEKPDNYNQLQRIKALQPDLVITGMAHANPLEARGISTKWSVEFTFAQIHGFGNARDILELVTRPLRRNQALAGLGWQKLVAH</sequence>
<gene>
    <name evidence="1" type="primary">chlN</name>
    <name type="ordered locus">tll2345</name>
</gene>
<name>CHLN_THEVB</name>